<reference key="1">
    <citation type="journal article" date="2011" name="Appl. Environ. Microbiol.">
        <title>Genomic potential of Marinobacter aquaeolei, a biogeochemical 'opportunitroph'.</title>
        <authorList>
            <person name="Singer E."/>
            <person name="Webb E.A."/>
            <person name="Nelson W.C."/>
            <person name="Heidelberg J.F."/>
            <person name="Ivanova N."/>
            <person name="Pati A."/>
            <person name="Edwards K.J."/>
        </authorList>
    </citation>
    <scope>NUCLEOTIDE SEQUENCE [LARGE SCALE GENOMIC DNA]</scope>
    <source>
        <strain>ATCC 700491 / DSM 11845 / VT8</strain>
    </source>
</reference>
<proteinExistence type="inferred from homology"/>
<gene>
    <name evidence="1" type="primary">rpsE</name>
    <name type="ordered locus">Maqu_0736</name>
</gene>
<comment type="function">
    <text evidence="1">With S4 and S12 plays an important role in translational accuracy.</text>
</comment>
<comment type="function">
    <text evidence="1">Located at the back of the 30S subunit body where it stabilizes the conformation of the head with respect to the body.</text>
</comment>
<comment type="subunit">
    <text evidence="1">Part of the 30S ribosomal subunit. Contacts proteins S4 and S8.</text>
</comment>
<comment type="domain">
    <text>The N-terminal domain interacts with the head of the 30S subunit; the C-terminal domain interacts with the body and contacts protein S4. The interaction surface between S4 and S5 is involved in control of translational fidelity.</text>
</comment>
<comment type="similarity">
    <text evidence="1">Belongs to the universal ribosomal protein uS5 family.</text>
</comment>
<name>RS5_MARN8</name>
<sequence length="166" mass="17431">MSVNEQKAPELQEKLVQVNRVAKVVKGGRIFAFTALTVVGDGKGRVGFGRGKAREVPVAIQKAMEAARKNMVDVALDGTTLQYPVRAQHGGSKVFMQPASEGTGIIAGGAMRAVLEVAGVQNVLSKCYGSTNPVNVVRSTIKGLQAMKAPEDVAAKRGKSVEDILG</sequence>
<dbReference type="EMBL" id="CP000514">
    <property type="protein sequence ID" value="ABM17833.1"/>
    <property type="molecule type" value="Genomic_DNA"/>
</dbReference>
<dbReference type="RefSeq" id="WP_011784259.1">
    <property type="nucleotide sequence ID" value="NC_008740.1"/>
</dbReference>
<dbReference type="SMR" id="A1TYL4"/>
<dbReference type="STRING" id="351348.Maqu_0736"/>
<dbReference type="GeneID" id="31820111"/>
<dbReference type="KEGG" id="maq:Maqu_0736"/>
<dbReference type="eggNOG" id="COG0098">
    <property type="taxonomic scope" value="Bacteria"/>
</dbReference>
<dbReference type="HOGENOM" id="CLU_065898_2_2_6"/>
<dbReference type="OrthoDB" id="9809045at2"/>
<dbReference type="Proteomes" id="UP000000998">
    <property type="component" value="Chromosome"/>
</dbReference>
<dbReference type="GO" id="GO:0015935">
    <property type="term" value="C:small ribosomal subunit"/>
    <property type="evidence" value="ECO:0007669"/>
    <property type="project" value="InterPro"/>
</dbReference>
<dbReference type="GO" id="GO:0019843">
    <property type="term" value="F:rRNA binding"/>
    <property type="evidence" value="ECO:0007669"/>
    <property type="project" value="UniProtKB-UniRule"/>
</dbReference>
<dbReference type="GO" id="GO:0003735">
    <property type="term" value="F:structural constituent of ribosome"/>
    <property type="evidence" value="ECO:0007669"/>
    <property type="project" value="InterPro"/>
</dbReference>
<dbReference type="GO" id="GO:0006412">
    <property type="term" value="P:translation"/>
    <property type="evidence" value="ECO:0007669"/>
    <property type="project" value="UniProtKB-UniRule"/>
</dbReference>
<dbReference type="FunFam" id="3.30.160.20:FF:000001">
    <property type="entry name" value="30S ribosomal protein S5"/>
    <property type="match status" value="1"/>
</dbReference>
<dbReference type="FunFam" id="3.30.230.10:FF:000002">
    <property type="entry name" value="30S ribosomal protein S5"/>
    <property type="match status" value="1"/>
</dbReference>
<dbReference type="Gene3D" id="3.30.160.20">
    <property type="match status" value="1"/>
</dbReference>
<dbReference type="Gene3D" id="3.30.230.10">
    <property type="match status" value="1"/>
</dbReference>
<dbReference type="HAMAP" id="MF_01307_B">
    <property type="entry name" value="Ribosomal_uS5_B"/>
    <property type="match status" value="1"/>
</dbReference>
<dbReference type="InterPro" id="IPR020568">
    <property type="entry name" value="Ribosomal_Su5_D2-typ_SF"/>
</dbReference>
<dbReference type="InterPro" id="IPR000851">
    <property type="entry name" value="Ribosomal_uS5"/>
</dbReference>
<dbReference type="InterPro" id="IPR005712">
    <property type="entry name" value="Ribosomal_uS5_bac-type"/>
</dbReference>
<dbReference type="InterPro" id="IPR005324">
    <property type="entry name" value="Ribosomal_uS5_C"/>
</dbReference>
<dbReference type="InterPro" id="IPR013810">
    <property type="entry name" value="Ribosomal_uS5_N"/>
</dbReference>
<dbReference type="InterPro" id="IPR018192">
    <property type="entry name" value="Ribosomal_uS5_N_CS"/>
</dbReference>
<dbReference type="InterPro" id="IPR014721">
    <property type="entry name" value="Ribsml_uS5_D2-typ_fold_subgr"/>
</dbReference>
<dbReference type="NCBIfam" id="TIGR01021">
    <property type="entry name" value="rpsE_bact"/>
    <property type="match status" value="1"/>
</dbReference>
<dbReference type="PANTHER" id="PTHR48432">
    <property type="entry name" value="S5 DRBM DOMAIN-CONTAINING PROTEIN"/>
    <property type="match status" value="1"/>
</dbReference>
<dbReference type="PANTHER" id="PTHR48432:SF1">
    <property type="entry name" value="S5 DRBM DOMAIN-CONTAINING PROTEIN"/>
    <property type="match status" value="1"/>
</dbReference>
<dbReference type="Pfam" id="PF00333">
    <property type="entry name" value="Ribosomal_S5"/>
    <property type="match status" value="1"/>
</dbReference>
<dbReference type="Pfam" id="PF03719">
    <property type="entry name" value="Ribosomal_S5_C"/>
    <property type="match status" value="1"/>
</dbReference>
<dbReference type="SUPFAM" id="SSF54768">
    <property type="entry name" value="dsRNA-binding domain-like"/>
    <property type="match status" value="1"/>
</dbReference>
<dbReference type="SUPFAM" id="SSF54211">
    <property type="entry name" value="Ribosomal protein S5 domain 2-like"/>
    <property type="match status" value="1"/>
</dbReference>
<dbReference type="PROSITE" id="PS00585">
    <property type="entry name" value="RIBOSOMAL_S5"/>
    <property type="match status" value="1"/>
</dbReference>
<dbReference type="PROSITE" id="PS50881">
    <property type="entry name" value="S5_DSRBD"/>
    <property type="match status" value="1"/>
</dbReference>
<organism>
    <name type="scientific">Marinobacter nauticus (strain ATCC 700491 / DSM 11845 / VT8)</name>
    <name type="common">Marinobacter aquaeolei</name>
    <dbReference type="NCBI Taxonomy" id="351348"/>
    <lineage>
        <taxon>Bacteria</taxon>
        <taxon>Pseudomonadati</taxon>
        <taxon>Pseudomonadota</taxon>
        <taxon>Gammaproteobacteria</taxon>
        <taxon>Pseudomonadales</taxon>
        <taxon>Marinobacteraceae</taxon>
        <taxon>Marinobacter</taxon>
    </lineage>
</organism>
<evidence type="ECO:0000255" key="1">
    <source>
        <dbReference type="HAMAP-Rule" id="MF_01307"/>
    </source>
</evidence>
<evidence type="ECO:0000305" key="2"/>
<protein>
    <recommendedName>
        <fullName evidence="1">Small ribosomal subunit protein uS5</fullName>
    </recommendedName>
    <alternativeName>
        <fullName evidence="2">30S ribosomal protein S5</fullName>
    </alternativeName>
</protein>
<feature type="chain" id="PRO_0000323154" description="Small ribosomal subunit protein uS5">
    <location>
        <begin position="1"/>
        <end position="166"/>
    </location>
</feature>
<feature type="domain" description="S5 DRBM" evidence="1">
    <location>
        <begin position="11"/>
        <end position="74"/>
    </location>
</feature>
<keyword id="KW-0687">Ribonucleoprotein</keyword>
<keyword id="KW-0689">Ribosomal protein</keyword>
<keyword id="KW-0694">RNA-binding</keyword>
<keyword id="KW-0699">rRNA-binding</keyword>
<accession>A1TYL4</accession>